<protein>
    <recommendedName>
        <fullName>Transmembrane protein 59</fullName>
    </recommendedName>
</protein>
<feature type="signal peptide" evidence="2">
    <location>
        <begin position="1"/>
        <end position="35"/>
    </location>
</feature>
<feature type="chain" id="PRO_0000282916" description="Transmembrane protein 59">
    <location>
        <begin position="36"/>
        <end position="323"/>
    </location>
</feature>
<feature type="topological domain" description="Extracellular" evidence="2">
    <location>
        <begin position="36"/>
        <end position="238"/>
    </location>
</feature>
<feature type="transmembrane region" description="Helical" evidence="2">
    <location>
        <begin position="239"/>
        <end position="259"/>
    </location>
</feature>
<feature type="topological domain" description="Cytoplasmic" evidence="2">
    <location>
        <begin position="260"/>
        <end position="323"/>
    </location>
</feature>
<feature type="short sequence motif" description="ATG16L1-binding motif" evidence="1">
    <location>
        <begin position="263"/>
        <end position="281"/>
    </location>
</feature>
<feature type="glycosylation site" description="N-linked (GlcNAc...) asparagine" evidence="2">
    <location>
        <position position="90"/>
    </location>
</feature>
<feature type="sequence conflict" description="In Ref. 2; AAI02303." evidence="3" ref="2">
    <original>N</original>
    <variation>S</variation>
    <location>
        <position position="289"/>
    </location>
</feature>
<organism>
    <name type="scientific">Bos taurus</name>
    <name type="common">Bovine</name>
    <dbReference type="NCBI Taxonomy" id="9913"/>
    <lineage>
        <taxon>Eukaryota</taxon>
        <taxon>Metazoa</taxon>
        <taxon>Chordata</taxon>
        <taxon>Craniata</taxon>
        <taxon>Vertebrata</taxon>
        <taxon>Euteleostomi</taxon>
        <taxon>Mammalia</taxon>
        <taxon>Eutheria</taxon>
        <taxon>Laurasiatheria</taxon>
        <taxon>Artiodactyla</taxon>
        <taxon>Ruminantia</taxon>
        <taxon>Pecora</taxon>
        <taxon>Bovidae</taxon>
        <taxon>Bovinae</taxon>
        <taxon>Bos</taxon>
    </lineage>
</organism>
<name>TMM59_BOVIN</name>
<sequence length="323" mass="36065">MAVPKGSLWLRAQLGIPPLLLLAMALAGGSGTASAEAFDSVLGDTASCHRACQLTYPLHTYPKEEELYACQRGCRLFSICQFVDDGIDLNRTKLECESACTEAYSQSDEQYACHLGCQNQLPYAELRQEQLMSLMPKMHLLFPLTLVRSFWSDMVDSAQSFITSSWTFYLQADDGKIVIFQSKPEIQYAPQLEQEPTNLKDSSLSKMSYLQMRSSQAHRNYLEDGESDGFLRCLSLNSGWILTVTLVLSVMVLLWICCATVATAVEQYVPSEKLSIYGDLEFMNEQKLNRYPASSLVVVRSKAEDHEEAGPLPAKVNLAHSEI</sequence>
<dbReference type="EMBL" id="DAAA02008837">
    <property type="status" value="NOT_ANNOTATED_CDS"/>
    <property type="molecule type" value="Genomic_DNA"/>
</dbReference>
<dbReference type="EMBL" id="BC102302">
    <property type="protein sequence ID" value="AAI02303.1"/>
    <property type="molecule type" value="mRNA"/>
</dbReference>
<dbReference type="RefSeq" id="NP_001030248.1">
    <property type="nucleotide sequence ID" value="NM_001035076.2"/>
</dbReference>
<dbReference type="FunCoup" id="Q3T0Q2">
    <property type="interactions" value="1505"/>
</dbReference>
<dbReference type="STRING" id="9913.ENSBTAP00000057337"/>
<dbReference type="GlyCosmos" id="Q3T0Q2">
    <property type="glycosylation" value="1 site, No reported glycans"/>
</dbReference>
<dbReference type="GlyGen" id="Q3T0Q2">
    <property type="glycosylation" value="1 site"/>
</dbReference>
<dbReference type="PaxDb" id="9913-ENSBTAP00000012534"/>
<dbReference type="GeneID" id="509775"/>
<dbReference type="KEGG" id="bta:509775"/>
<dbReference type="CTD" id="9528"/>
<dbReference type="VEuPathDB" id="HostDB:ENSBTAG00000009526"/>
<dbReference type="eggNOG" id="ENOG502QUIS">
    <property type="taxonomic scope" value="Eukaryota"/>
</dbReference>
<dbReference type="HOGENOM" id="CLU_059747_1_0_1"/>
<dbReference type="InParanoid" id="Q3T0Q2"/>
<dbReference type="OMA" id="MGCHNQL"/>
<dbReference type="OrthoDB" id="6371519at2759"/>
<dbReference type="TreeFam" id="TF331226"/>
<dbReference type="Reactome" id="R-BTA-9013407">
    <property type="pathway name" value="RHOH GTPase cycle"/>
</dbReference>
<dbReference type="Reactome" id="R-BTA-9696273">
    <property type="pathway name" value="RND1 GTPase cycle"/>
</dbReference>
<dbReference type="Proteomes" id="UP000009136">
    <property type="component" value="Chromosome 3"/>
</dbReference>
<dbReference type="Bgee" id="ENSBTAG00000009526">
    <property type="expression patterns" value="Expressed in prostate gland and 105 other cell types or tissues"/>
</dbReference>
<dbReference type="GO" id="GO:0000139">
    <property type="term" value="C:Golgi membrane"/>
    <property type="evidence" value="ECO:0007669"/>
    <property type="project" value="UniProtKB-SubCell"/>
</dbReference>
<dbReference type="GO" id="GO:0005770">
    <property type="term" value="C:late endosome"/>
    <property type="evidence" value="ECO:0000250"/>
    <property type="project" value="UniProtKB"/>
</dbReference>
<dbReference type="GO" id="GO:0031902">
    <property type="term" value="C:late endosome membrane"/>
    <property type="evidence" value="ECO:0007669"/>
    <property type="project" value="UniProtKB-SubCell"/>
</dbReference>
<dbReference type="GO" id="GO:0005765">
    <property type="term" value="C:lysosomal membrane"/>
    <property type="evidence" value="ECO:0007669"/>
    <property type="project" value="UniProtKB-SubCell"/>
</dbReference>
<dbReference type="GO" id="GO:0005764">
    <property type="term" value="C:lysosome"/>
    <property type="evidence" value="ECO:0000250"/>
    <property type="project" value="UniProtKB"/>
</dbReference>
<dbReference type="GO" id="GO:0005886">
    <property type="term" value="C:plasma membrane"/>
    <property type="evidence" value="ECO:0007669"/>
    <property type="project" value="UniProtKB-SubCell"/>
</dbReference>
<dbReference type="GO" id="GO:0006914">
    <property type="term" value="P:autophagy"/>
    <property type="evidence" value="ECO:0007669"/>
    <property type="project" value="UniProtKB-KW"/>
</dbReference>
<dbReference type="GO" id="GO:0010508">
    <property type="term" value="P:positive regulation of autophagy"/>
    <property type="evidence" value="ECO:0000250"/>
    <property type="project" value="UniProtKB"/>
</dbReference>
<dbReference type="InterPro" id="IPR022065">
    <property type="entry name" value="Uncharacterised_TMEM59"/>
</dbReference>
<dbReference type="PANTHER" id="PTHR28652:SF3">
    <property type="entry name" value="TRANSMEMBRANE PROTEIN 59"/>
    <property type="match status" value="1"/>
</dbReference>
<dbReference type="PANTHER" id="PTHR28652">
    <property type="entry name" value="TRANSMEMBRANE PROTEIN 59-LIKE PROTEIN"/>
    <property type="match status" value="1"/>
</dbReference>
<dbReference type="Pfam" id="PF12280">
    <property type="entry name" value="BSMAP"/>
    <property type="match status" value="1"/>
</dbReference>
<evidence type="ECO:0000250" key="1">
    <source>
        <dbReference type="UniProtKB" id="Q9BXS4"/>
    </source>
</evidence>
<evidence type="ECO:0000255" key="2"/>
<evidence type="ECO:0000305" key="3"/>
<accession>Q3T0Q2</accession>
<accession>F1MBR3</accession>
<proteinExistence type="evidence at transcript level"/>
<keyword id="KW-0072">Autophagy</keyword>
<keyword id="KW-1003">Cell membrane</keyword>
<keyword id="KW-0967">Endosome</keyword>
<keyword id="KW-0325">Glycoprotein</keyword>
<keyword id="KW-0333">Golgi apparatus</keyword>
<keyword id="KW-0458">Lysosome</keyword>
<keyword id="KW-0472">Membrane</keyword>
<keyword id="KW-1185">Reference proteome</keyword>
<keyword id="KW-0732">Signal</keyword>
<keyword id="KW-0812">Transmembrane</keyword>
<keyword id="KW-1133">Transmembrane helix</keyword>
<gene>
    <name type="primary">TMEM59</name>
</gene>
<comment type="function">
    <text evidence="1">Acts as a regulator of autophagy in response to S.aureus infection by promoting activation of LC3 (MAP1LC3A, MAP1LC3B or MAP1LC3C). Acts by interacting with ATG16L1, leading to promote a functional complex between LC3 and ATG16L1 and promoting LC3 lipidation and subsequent activation of autophagy. Modulates the O-glycosylation and complex N-glycosylation steps occurring during the Golgi maturation of several proteins such as APP, BACE1, SEAP or PRNP. Inhibits APP transport to the cell surface and further shedding.</text>
</comment>
<comment type="subunit">
    <text evidence="1">Interacts with ATG16L1 (via WD repeats).</text>
</comment>
<comment type="subcellular location">
    <subcellularLocation>
        <location evidence="1">Late endosome membrane</location>
        <topology evidence="2">Single-pass type I membrane protein</topology>
    </subcellularLocation>
    <subcellularLocation>
        <location evidence="1">Lysosome membrane</location>
        <topology evidence="2">Single-pass type I membrane protein</topology>
    </subcellularLocation>
    <subcellularLocation>
        <location evidence="1">Cell membrane</location>
        <topology evidence="2">Single-pass type I membrane protein</topology>
    </subcellularLocation>
    <subcellularLocation>
        <location evidence="1">Golgi apparatus membrane</location>
        <topology evidence="2">Single-pass type I membrane protein</topology>
    </subcellularLocation>
    <text evidence="1">Mainly localizes to late endosomes/lysosomes. Probably first exported to the cell surface and then actively endocytosed to transiently localize in early endosomes on its way to the late endosomal/lysosomal compartment where it becomes quickly degraded.</text>
</comment>
<comment type="domain">
    <text evidence="1">The ATG16L1-binding motif mediates interaction with ATG16L1 and promotes autophagy.</text>
</comment>
<comment type="PTM">
    <text evidence="1">N-glycosylated.</text>
</comment>
<comment type="similarity">
    <text evidence="3">Belongs to the TMEM59 family.</text>
</comment>
<reference key="1">
    <citation type="journal article" date="2009" name="Genome Biol.">
        <title>A whole-genome assembly of the domestic cow, Bos taurus.</title>
        <authorList>
            <person name="Zimin A.V."/>
            <person name="Delcher A.L."/>
            <person name="Florea L."/>
            <person name="Kelley D.R."/>
            <person name="Schatz M.C."/>
            <person name="Puiu D."/>
            <person name="Hanrahan F."/>
            <person name="Pertea G."/>
            <person name="Van Tassell C.P."/>
            <person name="Sonstegard T.S."/>
            <person name="Marcais G."/>
            <person name="Roberts M."/>
            <person name="Subramanian P."/>
            <person name="Yorke J.A."/>
            <person name="Salzberg S.L."/>
        </authorList>
    </citation>
    <scope>NUCLEOTIDE SEQUENCE [LARGE SCALE GENOMIC DNA]</scope>
    <source>
        <strain>Hereford</strain>
    </source>
</reference>
<reference key="2">
    <citation type="submission" date="2005-08" db="EMBL/GenBank/DDBJ databases">
        <authorList>
            <consortium name="NIH - Mammalian Gene Collection (MGC) project"/>
        </authorList>
    </citation>
    <scope>NUCLEOTIDE SEQUENCE [LARGE SCALE MRNA]</scope>
    <source>
        <strain>Crossbred X Angus</strain>
        <tissue>Ileum</tissue>
    </source>
</reference>